<evidence type="ECO:0000255" key="1">
    <source>
        <dbReference type="HAMAP-Rule" id="MF_00161"/>
    </source>
</evidence>
<evidence type="ECO:0000256" key="2">
    <source>
        <dbReference type="SAM" id="MobiDB-lite"/>
    </source>
</evidence>
<evidence type="ECO:0000305" key="3"/>
<name>LSPA_MYCBO</name>
<gene>
    <name evidence="1" type="primary">lspA</name>
    <name type="ordered locus">BQ2027_MB1566</name>
</gene>
<reference key="1">
    <citation type="journal article" date="2003" name="Proc. Natl. Acad. Sci. U.S.A.">
        <title>The complete genome sequence of Mycobacterium bovis.</title>
        <authorList>
            <person name="Garnier T."/>
            <person name="Eiglmeier K."/>
            <person name="Camus J.-C."/>
            <person name="Medina N."/>
            <person name="Mansoor H."/>
            <person name="Pryor M."/>
            <person name="Duthoy S."/>
            <person name="Grondin S."/>
            <person name="Lacroix C."/>
            <person name="Monsempe C."/>
            <person name="Simon S."/>
            <person name="Harris B."/>
            <person name="Atkin R."/>
            <person name="Doggett J."/>
            <person name="Mayes R."/>
            <person name="Keating L."/>
            <person name="Wheeler P.R."/>
            <person name="Parkhill J."/>
            <person name="Barrell B.G."/>
            <person name="Cole S.T."/>
            <person name="Gordon S.V."/>
            <person name="Hewinson R.G."/>
        </authorList>
    </citation>
    <scope>NUCLEOTIDE SEQUENCE [LARGE SCALE GENOMIC DNA]</scope>
    <source>
        <strain>ATCC BAA-935 / AF2122/97</strain>
    </source>
</reference>
<reference key="2">
    <citation type="journal article" date="2017" name="Genome Announc.">
        <title>Updated reference genome sequence and annotation of Mycobacterium bovis AF2122/97.</title>
        <authorList>
            <person name="Malone K.M."/>
            <person name="Farrell D."/>
            <person name="Stuber T.P."/>
            <person name="Schubert O.T."/>
            <person name="Aebersold R."/>
            <person name="Robbe-Austerman S."/>
            <person name="Gordon S.V."/>
        </authorList>
    </citation>
    <scope>NUCLEOTIDE SEQUENCE [LARGE SCALE GENOMIC DNA]</scope>
    <scope>GENOME REANNOTATION</scope>
    <source>
        <strain>ATCC BAA-935 / AF2122/97</strain>
    </source>
</reference>
<sequence>MPDEPTGSADPLTSTEEAGGAGEPNAPAPPRRLRMLLSVAVVVLTLDIVTKVVAVQLLPPGQPVSIIGDTVTWTLVRNSGAAFSMATGYTWVLTLIATGVVVGIFWMGRRLVSPWWALGLGMILGGAMGNLVDRFFRAPGPLRGHVVDFLSVGWWPVFNVADPSVVGGAILLVILSIFGFDFDTVGRRHADGDTVGRRKADG</sequence>
<protein>
    <recommendedName>
        <fullName evidence="1">Lipoprotein signal peptidase</fullName>
        <ecNumber evidence="1">3.4.23.36</ecNumber>
    </recommendedName>
    <alternativeName>
        <fullName evidence="1">Prolipoprotein signal peptidase</fullName>
    </alternativeName>
    <alternativeName>
        <fullName evidence="1">Signal peptidase II</fullName>
        <shortName evidence="1">SPase II</shortName>
    </alternativeName>
</protein>
<feature type="chain" id="PRO_0000178796" description="Lipoprotein signal peptidase">
    <location>
        <begin position="1"/>
        <end position="202"/>
    </location>
</feature>
<feature type="transmembrane region" description="Helical" evidence="1">
    <location>
        <begin position="35"/>
        <end position="55"/>
    </location>
</feature>
<feature type="transmembrane region" description="Helical" evidence="1">
    <location>
        <begin position="88"/>
        <end position="108"/>
    </location>
</feature>
<feature type="transmembrane region" description="Helical" evidence="1">
    <location>
        <begin position="112"/>
        <end position="132"/>
    </location>
</feature>
<feature type="transmembrane region" description="Helical" evidence="1">
    <location>
        <begin position="160"/>
        <end position="180"/>
    </location>
</feature>
<feature type="region of interest" description="Disordered" evidence="2">
    <location>
        <begin position="1"/>
        <end position="29"/>
    </location>
</feature>
<feature type="active site" evidence="1">
    <location>
        <position position="148"/>
    </location>
</feature>
<feature type="active site" evidence="1">
    <location>
        <position position="162"/>
    </location>
</feature>
<dbReference type="EC" id="3.4.23.36" evidence="1"/>
<dbReference type="EMBL" id="LT708304">
    <property type="protein sequence ID" value="SIU00169.1"/>
    <property type="molecule type" value="Genomic_DNA"/>
</dbReference>
<dbReference type="RefSeq" id="NP_855218.1">
    <property type="nucleotide sequence ID" value="NC_002945.3"/>
</dbReference>
<dbReference type="RefSeq" id="WP_003407722.1">
    <property type="nucleotide sequence ID" value="NC_002945.4"/>
</dbReference>
<dbReference type="SMR" id="P65263"/>
<dbReference type="GeneID" id="45425522"/>
<dbReference type="KEGG" id="mbo:BQ2027_MB1566"/>
<dbReference type="PATRIC" id="fig|233413.5.peg.1712"/>
<dbReference type="UniPathway" id="UPA00665"/>
<dbReference type="Proteomes" id="UP000001419">
    <property type="component" value="Chromosome"/>
</dbReference>
<dbReference type="GO" id="GO:0005886">
    <property type="term" value="C:plasma membrane"/>
    <property type="evidence" value="ECO:0007669"/>
    <property type="project" value="UniProtKB-SubCell"/>
</dbReference>
<dbReference type="GO" id="GO:0004190">
    <property type="term" value="F:aspartic-type endopeptidase activity"/>
    <property type="evidence" value="ECO:0007669"/>
    <property type="project" value="UniProtKB-UniRule"/>
</dbReference>
<dbReference type="GO" id="GO:0006508">
    <property type="term" value="P:proteolysis"/>
    <property type="evidence" value="ECO:0007669"/>
    <property type="project" value="UniProtKB-KW"/>
</dbReference>
<dbReference type="HAMAP" id="MF_00161">
    <property type="entry name" value="LspA"/>
    <property type="match status" value="1"/>
</dbReference>
<dbReference type="InterPro" id="IPR001872">
    <property type="entry name" value="Peptidase_A8"/>
</dbReference>
<dbReference type="NCBIfam" id="TIGR00077">
    <property type="entry name" value="lspA"/>
    <property type="match status" value="1"/>
</dbReference>
<dbReference type="PANTHER" id="PTHR33695">
    <property type="entry name" value="LIPOPROTEIN SIGNAL PEPTIDASE"/>
    <property type="match status" value="1"/>
</dbReference>
<dbReference type="PANTHER" id="PTHR33695:SF1">
    <property type="entry name" value="LIPOPROTEIN SIGNAL PEPTIDASE"/>
    <property type="match status" value="1"/>
</dbReference>
<dbReference type="Pfam" id="PF01252">
    <property type="entry name" value="Peptidase_A8"/>
    <property type="match status" value="1"/>
</dbReference>
<dbReference type="PRINTS" id="PR00781">
    <property type="entry name" value="LIPOSIGPTASE"/>
</dbReference>
<dbReference type="PROSITE" id="PS00855">
    <property type="entry name" value="SPASE_II"/>
    <property type="match status" value="1"/>
</dbReference>
<comment type="function">
    <text evidence="1">This protein specifically catalyzes the removal of signal peptides from prolipoproteins.</text>
</comment>
<comment type="catalytic activity">
    <reaction evidence="1">
        <text>Release of signal peptides from bacterial membrane prolipoproteins. Hydrolyzes -Xaa-Yaa-Zaa-|-(S,diacylglyceryl)Cys-, in which Xaa is hydrophobic (preferably Leu), and Yaa (Ala or Ser) and Zaa (Gly or Ala) have small, neutral side chains.</text>
        <dbReference type="EC" id="3.4.23.36"/>
    </reaction>
</comment>
<comment type="pathway">
    <text evidence="1">Protein modification; lipoprotein biosynthesis (signal peptide cleavage).</text>
</comment>
<comment type="subcellular location">
    <subcellularLocation>
        <location evidence="1">Cell membrane</location>
        <topology evidence="1">Multi-pass membrane protein</topology>
    </subcellularLocation>
</comment>
<comment type="similarity">
    <text evidence="1 3">Belongs to the peptidase A8 family.</text>
</comment>
<keyword id="KW-0064">Aspartyl protease</keyword>
<keyword id="KW-1003">Cell membrane</keyword>
<keyword id="KW-0378">Hydrolase</keyword>
<keyword id="KW-0472">Membrane</keyword>
<keyword id="KW-0645">Protease</keyword>
<keyword id="KW-1185">Reference proteome</keyword>
<keyword id="KW-0812">Transmembrane</keyword>
<keyword id="KW-1133">Transmembrane helix</keyword>
<accession>P65263</accession>
<accession>A0A1R3XYL2</accession>
<accession>Q10764</accession>
<accession>X2BI59</accession>
<proteinExistence type="inferred from homology"/>
<organism>
    <name type="scientific">Mycobacterium bovis (strain ATCC BAA-935 / AF2122/97)</name>
    <dbReference type="NCBI Taxonomy" id="233413"/>
    <lineage>
        <taxon>Bacteria</taxon>
        <taxon>Bacillati</taxon>
        <taxon>Actinomycetota</taxon>
        <taxon>Actinomycetes</taxon>
        <taxon>Mycobacteriales</taxon>
        <taxon>Mycobacteriaceae</taxon>
        <taxon>Mycobacterium</taxon>
        <taxon>Mycobacterium tuberculosis complex</taxon>
    </lineage>
</organism>